<sequence>MIKVAPSILSADFAALGNEIKDVEKGGADCIHIDVMDGHFVPNITIGPLIVEAVRPVTDLPLDVHLMIEEPDRYIPAFAKAGADILSVHAEACPHLHRTIQLIKEQGVKAGVVLNPHTPVQVIEHVFDDLDLVLLMTVNPGFGGQKFIHSVLPKIKEVKRMADEKGKKDLLIEVDGGVNKETAPLVIEAGANLLVAGSAVYGQSDRKKAISEIRGSK</sequence>
<proteinExistence type="inferred from homology"/>
<comment type="function">
    <text evidence="1">Catalyzes the reversible epimerization of D-ribulose 5-phosphate to D-xylulose 5-phosphate.</text>
</comment>
<comment type="catalytic activity">
    <reaction evidence="1">
        <text>D-ribulose 5-phosphate = D-xylulose 5-phosphate</text>
        <dbReference type="Rhea" id="RHEA:13677"/>
        <dbReference type="ChEBI" id="CHEBI:57737"/>
        <dbReference type="ChEBI" id="CHEBI:58121"/>
        <dbReference type="EC" id="5.1.3.1"/>
    </reaction>
</comment>
<comment type="cofactor">
    <cofactor evidence="1">
        <name>a divalent metal cation</name>
        <dbReference type="ChEBI" id="CHEBI:60240"/>
    </cofactor>
    <text evidence="1">Binds 1 divalent metal cation per subunit.</text>
</comment>
<comment type="pathway">
    <text evidence="1">Carbohydrate degradation.</text>
</comment>
<comment type="similarity">
    <text evidence="1">Belongs to the ribulose-phosphate 3-epimerase family.</text>
</comment>
<gene>
    <name evidence="1" type="primary">rpe</name>
    <name type="synonym">yloR</name>
    <name type="ordered locus">BSU15790</name>
</gene>
<evidence type="ECO:0000255" key="1">
    <source>
        <dbReference type="HAMAP-Rule" id="MF_02227"/>
    </source>
</evidence>
<organism>
    <name type="scientific">Bacillus subtilis (strain 168)</name>
    <dbReference type="NCBI Taxonomy" id="224308"/>
    <lineage>
        <taxon>Bacteria</taxon>
        <taxon>Bacillati</taxon>
        <taxon>Bacillota</taxon>
        <taxon>Bacilli</taxon>
        <taxon>Bacillales</taxon>
        <taxon>Bacillaceae</taxon>
        <taxon>Bacillus</taxon>
    </lineage>
</organism>
<accession>O34557</accession>
<name>RPE_BACSU</name>
<feature type="chain" id="PRO_0000171561" description="Ribulose-phosphate 3-epimerase">
    <location>
        <begin position="1"/>
        <end position="217"/>
    </location>
</feature>
<feature type="active site" description="Proton acceptor" evidence="1">
    <location>
        <position position="34"/>
    </location>
</feature>
<feature type="active site" description="Proton donor" evidence="1">
    <location>
        <position position="175"/>
    </location>
</feature>
<feature type="binding site" evidence="1">
    <location>
        <position position="7"/>
    </location>
    <ligand>
        <name>substrate</name>
    </ligand>
</feature>
<feature type="binding site" evidence="1">
    <location>
        <position position="32"/>
    </location>
    <ligand>
        <name>a divalent metal cation</name>
        <dbReference type="ChEBI" id="CHEBI:60240"/>
    </ligand>
</feature>
<feature type="binding site" evidence="1">
    <location>
        <position position="34"/>
    </location>
    <ligand>
        <name>a divalent metal cation</name>
        <dbReference type="ChEBI" id="CHEBI:60240"/>
    </ligand>
</feature>
<feature type="binding site" evidence="1">
    <location>
        <position position="65"/>
    </location>
    <ligand>
        <name>a divalent metal cation</name>
        <dbReference type="ChEBI" id="CHEBI:60240"/>
    </ligand>
</feature>
<feature type="binding site" evidence="1">
    <location>
        <position position="65"/>
    </location>
    <ligand>
        <name>substrate</name>
    </ligand>
</feature>
<feature type="binding site" evidence="1">
    <location>
        <begin position="141"/>
        <end position="144"/>
    </location>
    <ligand>
        <name>substrate</name>
    </ligand>
</feature>
<feature type="binding site" evidence="1">
    <location>
        <begin position="175"/>
        <end position="177"/>
    </location>
    <ligand>
        <name>substrate</name>
    </ligand>
</feature>
<feature type="binding site" evidence="1">
    <location>
        <position position="175"/>
    </location>
    <ligand>
        <name>a divalent metal cation</name>
        <dbReference type="ChEBI" id="CHEBI:60240"/>
    </ligand>
</feature>
<feature type="binding site" evidence="1">
    <location>
        <begin position="197"/>
        <end position="198"/>
    </location>
    <ligand>
        <name>substrate</name>
    </ligand>
</feature>
<dbReference type="EC" id="5.1.3.1" evidence="1"/>
<dbReference type="EMBL" id="Y13937">
    <property type="protein sequence ID" value="CAA74252.1"/>
    <property type="molecule type" value="Genomic_DNA"/>
</dbReference>
<dbReference type="EMBL" id="AL009126">
    <property type="protein sequence ID" value="CAB13452.1"/>
    <property type="molecule type" value="Genomic_DNA"/>
</dbReference>
<dbReference type="PIR" id="B69879">
    <property type="entry name" value="B69879"/>
</dbReference>
<dbReference type="RefSeq" id="NP_389461.1">
    <property type="nucleotide sequence ID" value="NC_000964.3"/>
</dbReference>
<dbReference type="RefSeq" id="WP_003232058.1">
    <property type="nucleotide sequence ID" value="NZ_OZ025638.1"/>
</dbReference>
<dbReference type="SMR" id="O34557"/>
<dbReference type="FunCoup" id="O34557">
    <property type="interactions" value="804"/>
</dbReference>
<dbReference type="STRING" id="224308.BSU15790"/>
<dbReference type="PaxDb" id="224308-BSU15790"/>
<dbReference type="EnsemblBacteria" id="CAB13452">
    <property type="protein sequence ID" value="CAB13452"/>
    <property type="gene ID" value="BSU_15790"/>
</dbReference>
<dbReference type="GeneID" id="936393"/>
<dbReference type="KEGG" id="bsu:BSU15790"/>
<dbReference type="PATRIC" id="fig|224308.179.peg.1719"/>
<dbReference type="eggNOG" id="COG0036">
    <property type="taxonomic scope" value="Bacteria"/>
</dbReference>
<dbReference type="InParanoid" id="O34557"/>
<dbReference type="OrthoDB" id="1645589at2"/>
<dbReference type="PhylomeDB" id="O34557"/>
<dbReference type="BioCyc" id="BSUB:BSU15790-MONOMER"/>
<dbReference type="Proteomes" id="UP000001570">
    <property type="component" value="Chromosome"/>
</dbReference>
<dbReference type="GO" id="GO:0005829">
    <property type="term" value="C:cytosol"/>
    <property type="evidence" value="ECO:0000318"/>
    <property type="project" value="GO_Central"/>
</dbReference>
<dbReference type="GO" id="GO:0004750">
    <property type="term" value="F:D-ribulose-phosphate 3-epimerase activity"/>
    <property type="evidence" value="ECO:0000318"/>
    <property type="project" value="GO_Central"/>
</dbReference>
<dbReference type="GO" id="GO:0046872">
    <property type="term" value="F:metal ion binding"/>
    <property type="evidence" value="ECO:0000318"/>
    <property type="project" value="GO_Central"/>
</dbReference>
<dbReference type="GO" id="GO:0005975">
    <property type="term" value="P:carbohydrate metabolic process"/>
    <property type="evidence" value="ECO:0000318"/>
    <property type="project" value="GO_Central"/>
</dbReference>
<dbReference type="GO" id="GO:0019323">
    <property type="term" value="P:pentose catabolic process"/>
    <property type="evidence" value="ECO:0007669"/>
    <property type="project" value="UniProtKB-UniRule"/>
</dbReference>
<dbReference type="GO" id="GO:0009052">
    <property type="term" value="P:pentose-phosphate shunt, non-oxidative branch"/>
    <property type="evidence" value="ECO:0000318"/>
    <property type="project" value="GO_Central"/>
</dbReference>
<dbReference type="CDD" id="cd00429">
    <property type="entry name" value="RPE"/>
    <property type="match status" value="1"/>
</dbReference>
<dbReference type="FunFam" id="3.20.20.70:FF:000004">
    <property type="entry name" value="Ribulose-phosphate 3-epimerase"/>
    <property type="match status" value="1"/>
</dbReference>
<dbReference type="Gene3D" id="3.20.20.70">
    <property type="entry name" value="Aldolase class I"/>
    <property type="match status" value="1"/>
</dbReference>
<dbReference type="HAMAP" id="MF_02227">
    <property type="entry name" value="RPE"/>
    <property type="match status" value="1"/>
</dbReference>
<dbReference type="InterPro" id="IPR013785">
    <property type="entry name" value="Aldolase_TIM"/>
</dbReference>
<dbReference type="InterPro" id="IPR026019">
    <property type="entry name" value="Ribul_P_3_epim"/>
</dbReference>
<dbReference type="InterPro" id="IPR000056">
    <property type="entry name" value="Ribul_P_3_epim-like"/>
</dbReference>
<dbReference type="InterPro" id="IPR011060">
    <property type="entry name" value="RibuloseP-bd_barrel"/>
</dbReference>
<dbReference type="NCBIfam" id="NF004076">
    <property type="entry name" value="PRK05581.1-4"/>
    <property type="match status" value="1"/>
</dbReference>
<dbReference type="NCBIfam" id="TIGR01163">
    <property type="entry name" value="rpe"/>
    <property type="match status" value="1"/>
</dbReference>
<dbReference type="PANTHER" id="PTHR11749">
    <property type="entry name" value="RIBULOSE-5-PHOSPHATE-3-EPIMERASE"/>
    <property type="match status" value="1"/>
</dbReference>
<dbReference type="Pfam" id="PF00834">
    <property type="entry name" value="Ribul_P_3_epim"/>
    <property type="match status" value="1"/>
</dbReference>
<dbReference type="PIRSF" id="PIRSF001461">
    <property type="entry name" value="RPE"/>
    <property type="match status" value="1"/>
</dbReference>
<dbReference type="SUPFAM" id="SSF51366">
    <property type="entry name" value="Ribulose-phoshate binding barrel"/>
    <property type="match status" value="1"/>
</dbReference>
<dbReference type="PROSITE" id="PS01085">
    <property type="entry name" value="RIBUL_P_3_EPIMER_1"/>
    <property type="match status" value="1"/>
</dbReference>
<dbReference type="PROSITE" id="PS01086">
    <property type="entry name" value="RIBUL_P_3_EPIMER_2"/>
    <property type="match status" value="1"/>
</dbReference>
<keyword id="KW-0119">Carbohydrate metabolism</keyword>
<keyword id="KW-0413">Isomerase</keyword>
<keyword id="KW-0479">Metal-binding</keyword>
<keyword id="KW-1185">Reference proteome</keyword>
<protein>
    <recommendedName>
        <fullName evidence="1">Ribulose-phosphate 3-epimerase</fullName>
        <ecNumber evidence="1">5.1.3.1</ecNumber>
    </recommendedName>
</protein>
<reference key="1">
    <citation type="journal article" date="1998" name="Microbiology">
        <title>A 28 kbp segment from the spoVM region of the Bacillus subtilis 168 genome.</title>
        <authorList>
            <person name="Foulger D."/>
            <person name="Errington J."/>
        </authorList>
    </citation>
    <scope>NUCLEOTIDE SEQUENCE [GENOMIC DNA]</scope>
    <source>
        <strain>168</strain>
    </source>
</reference>
<reference key="2">
    <citation type="journal article" date="1997" name="Nature">
        <title>The complete genome sequence of the Gram-positive bacterium Bacillus subtilis.</title>
        <authorList>
            <person name="Kunst F."/>
            <person name="Ogasawara N."/>
            <person name="Moszer I."/>
            <person name="Albertini A.M."/>
            <person name="Alloni G."/>
            <person name="Azevedo V."/>
            <person name="Bertero M.G."/>
            <person name="Bessieres P."/>
            <person name="Bolotin A."/>
            <person name="Borchert S."/>
            <person name="Borriss R."/>
            <person name="Boursier L."/>
            <person name="Brans A."/>
            <person name="Braun M."/>
            <person name="Brignell S.C."/>
            <person name="Bron S."/>
            <person name="Brouillet S."/>
            <person name="Bruschi C.V."/>
            <person name="Caldwell B."/>
            <person name="Capuano V."/>
            <person name="Carter N.M."/>
            <person name="Choi S.-K."/>
            <person name="Codani J.-J."/>
            <person name="Connerton I.F."/>
            <person name="Cummings N.J."/>
            <person name="Daniel R.A."/>
            <person name="Denizot F."/>
            <person name="Devine K.M."/>
            <person name="Duesterhoeft A."/>
            <person name="Ehrlich S.D."/>
            <person name="Emmerson P.T."/>
            <person name="Entian K.-D."/>
            <person name="Errington J."/>
            <person name="Fabret C."/>
            <person name="Ferrari E."/>
            <person name="Foulger D."/>
            <person name="Fritz C."/>
            <person name="Fujita M."/>
            <person name="Fujita Y."/>
            <person name="Fuma S."/>
            <person name="Galizzi A."/>
            <person name="Galleron N."/>
            <person name="Ghim S.-Y."/>
            <person name="Glaser P."/>
            <person name="Goffeau A."/>
            <person name="Golightly E.J."/>
            <person name="Grandi G."/>
            <person name="Guiseppi G."/>
            <person name="Guy B.J."/>
            <person name="Haga K."/>
            <person name="Haiech J."/>
            <person name="Harwood C.R."/>
            <person name="Henaut A."/>
            <person name="Hilbert H."/>
            <person name="Holsappel S."/>
            <person name="Hosono S."/>
            <person name="Hullo M.-F."/>
            <person name="Itaya M."/>
            <person name="Jones L.-M."/>
            <person name="Joris B."/>
            <person name="Karamata D."/>
            <person name="Kasahara Y."/>
            <person name="Klaerr-Blanchard M."/>
            <person name="Klein C."/>
            <person name="Kobayashi Y."/>
            <person name="Koetter P."/>
            <person name="Koningstein G."/>
            <person name="Krogh S."/>
            <person name="Kumano M."/>
            <person name="Kurita K."/>
            <person name="Lapidus A."/>
            <person name="Lardinois S."/>
            <person name="Lauber J."/>
            <person name="Lazarevic V."/>
            <person name="Lee S.-M."/>
            <person name="Levine A."/>
            <person name="Liu H."/>
            <person name="Masuda S."/>
            <person name="Mauel C."/>
            <person name="Medigue C."/>
            <person name="Medina N."/>
            <person name="Mellado R.P."/>
            <person name="Mizuno M."/>
            <person name="Moestl D."/>
            <person name="Nakai S."/>
            <person name="Noback M."/>
            <person name="Noone D."/>
            <person name="O'Reilly M."/>
            <person name="Ogawa K."/>
            <person name="Ogiwara A."/>
            <person name="Oudega B."/>
            <person name="Park S.-H."/>
            <person name="Parro V."/>
            <person name="Pohl T.M."/>
            <person name="Portetelle D."/>
            <person name="Porwollik S."/>
            <person name="Prescott A.M."/>
            <person name="Presecan E."/>
            <person name="Pujic P."/>
            <person name="Purnelle B."/>
            <person name="Rapoport G."/>
            <person name="Rey M."/>
            <person name="Reynolds S."/>
            <person name="Rieger M."/>
            <person name="Rivolta C."/>
            <person name="Rocha E."/>
            <person name="Roche B."/>
            <person name="Rose M."/>
            <person name="Sadaie Y."/>
            <person name="Sato T."/>
            <person name="Scanlan E."/>
            <person name="Schleich S."/>
            <person name="Schroeter R."/>
            <person name="Scoffone F."/>
            <person name="Sekiguchi J."/>
            <person name="Sekowska A."/>
            <person name="Seror S.J."/>
            <person name="Serror P."/>
            <person name="Shin B.-S."/>
            <person name="Soldo B."/>
            <person name="Sorokin A."/>
            <person name="Tacconi E."/>
            <person name="Takagi T."/>
            <person name="Takahashi H."/>
            <person name="Takemaru K."/>
            <person name="Takeuchi M."/>
            <person name="Tamakoshi A."/>
            <person name="Tanaka T."/>
            <person name="Terpstra P."/>
            <person name="Tognoni A."/>
            <person name="Tosato V."/>
            <person name="Uchiyama S."/>
            <person name="Vandenbol M."/>
            <person name="Vannier F."/>
            <person name="Vassarotti A."/>
            <person name="Viari A."/>
            <person name="Wambutt R."/>
            <person name="Wedler E."/>
            <person name="Wedler H."/>
            <person name="Weitzenegger T."/>
            <person name="Winters P."/>
            <person name="Wipat A."/>
            <person name="Yamamoto H."/>
            <person name="Yamane K."/>
            <person name="Yasumoto K."/>
            <person name="Yata K."/>
            <person name="Yoshida K."/>
            <person name="Yoshikawa H.-F."/>
            <person name="Zumstein E."/>
            <person name="Yoshikawa H."/>
            <person name="Danchin A."/>
        </authorList>
    </citation>
    <scope>NUCLEOTIDE SEQUENCE [LARGE SCALE GENOMIC DNA]</scope>
    <source>
        <strain>168</strain>
    </source>
</reference>